<protein>
    <recommendedName>
        <fullName evidence="1">GTPase Era</fullName>
    </recommendedName>
</protein>
<keyword id="KW-0997">Cell inner membrane</keyword>
<keyword id="KW-1003">Cell membrane</keyword>
<keyword id="KW-0963">Cytoplasm</keyword>
<keyword id="KW-0342">GTP-binding</keyword>
<keyword id="KW-0472">Membrane</keyword>
<keyword id="KW-0547">Nucleotide-binding</keyword>
<keyword id="KW-0690">Ribosome biogenesis</keyword>
<keyword id="KW-0694">RNA-binding</keyword>
<keyword id="KW-0699">rRNA-binding</keyword>
<name>ERA_ACTP7</name>
<comment type="function">
    <text evidence="1">An essential GTPase that binds both GDP and GTP, with rapid nucleotide exchange. Plays a role in 16S rRNA processing and 30S ribosomal subunit biogenesis and possibly also in cell cycle regulation and energy metabolism.</text>
</comment>
<comment type="subunit">
    <text evidence="1">Monomer.</text>
</comment>
<comment type="subcellular location">
    <subcellularLocation>
        <location>Cytoplasm</location>
    </subcellularLocation>
    <subcellularLocation>
        <location evidence="1">Cell inner membrane</location>
        <topology evidence="1">Peripheral membrane protein</topology>
    </subcellularLocation>
</comment>
<comment type="similarity">
    <text evidence="1 2">Belongs to the TRAFAC class TrmE-Era-EngA-EngB-Septin-like GTPase superfamily. Era GTPase family.</text>
</comment>
<sequence>MTEQNQQPKTYCGFIAIVGRPNVGKSTLLNKILGQKISITSRKAQTTRHRIVGIHTEDQYQAIYVDTPGLHIEEKRAINRLMNRAASSAIGDVDLIIFVVEGTKWTDDDEMVLNKLRSAKAPVVLAINKVDNIKEKDELLPHITELSQKFDFAEILPISAQRGKNVHILQKIVRKSLREGVHHFPEEYVTDRSQRFMASEIIREKLMRFTGEELPYSVTVEIEQFKLNERGTYEINGLILVEREGQKKMVIGAKGQKIKTIGMEARADMERLFDNKVHLELWVKVKAGWADDERALRSLGYMDE</sequence>
<evidence type="ECO:0000255" key="1">
    <source>
        <dbReference type="HAMAP-Rule" id="MF_00367"/>
    </source>
</evidence>
<evidence type="ECO:0000255" key="2">
    <source>
        <dbReference type="PROSITE-ProRule" id="PRU01050"/>
    </source>
</evidence>
<organism>
    <name type="scientific">Actinobacillus pleuropneumoniae serotype 7 (strain AP76)</name>
    <dbReference type="NCBI Taxonomy" id="537457"/>
    <lineage>
        <taxon>Bacteria</taxon>
        <taxon>Pseudomonadati</taxon>
        <taxon>Pseudomonadota</taxon>
        <taxon>Gammaproteobacteria</taxon>
        <taxon>Pasteurellales</taxon>
        <taxon>Pasteurellaceae</taxon>
        <taxon>Actinobacillus</taxon>
    </lineage>
</organism>
<gene>
    <name evidence="1" type="primary">era</name>
    <name type="ordered locus">APP7_0586</name>
</gene>
<feature type="chain" id="PRO_1000121296" description="GTPase Era">
    <location>
        <begin position="1"/>
        <end position="304"/>
    </location>
</feature>
<feature type="domain" description="Era-type G" evidence="2">
    <location>
        <begin position="11"/>
        <end position="179"/>
    </location>
</feature>
<feature type="domain" description="KH type-2" evidence="1">
    <location>
        <begin position="210"/>
        <end position="287"/>
    </location>
</feature>
<feature type="region of interest" description="G1" evidence="2">
    <location>
        <begin position="19"/>
        <end position="26"/>
    </location>
</feature>
<feature type="region of interest" description="G2" evidence="2">
    <location>
        <begin position="45"/>
        <end position="49"/>
    </location>
</feature>
<feature type="region of interest" description="G3" evidence="2">
    <location>
        <begin position="66"/>
        <end position="69"/>
    </location>
</feature>
<feature type="region of interest" description="G4" evidence="2">
    <location>
        <begin position="128"/>
        <end position="131"/>
    </location>
</feature>
<feature type="region of interest" description="G5" evidence="2">
    <location>
        <begin position="158"/>
        <end position="160"/>
    </location>
</feature>
<feature type="binding site" evidence="1">
    <location>
        <begin position="19"/>
        <end position="26"/>
    </location>
    <ligand>
        <name>GTP</name>
        <dbReference type="ChEBI" id="CHEBI:37565"/>
    </ligand>
</feature>
<feature type="binding site" evidence="1">
    <location>
        <begin position="66"/>
        <end position="70"/>
    </location>
    <ligand>
        <name>GTP</name>
        <dbReference type="ChEBI" id="CHEBI:37565"/>
    </ligand>
</feature>
<feature type="binding site" evidence="1">
    <location>
        <begin position="128"/>
        <end position="131"/>
    </location>
    <ligand>
        <name>GTP</name>
        <dbReference type="ChEBI" id="CHEBI:37565"/>
    </ligand>
</feature>
<accession>B3GX86</accession>
<proteinExistence type="inferred from homology"/>
<reference key="1">
    <citation type="submission" date="2008-06" db="EMBL/GenBank/DDBJ databases">
        <title>Genome and proteome analysis of A. pleuropneumoniae serotype 7.</title>
        <authorList>
            <person name="Linke B."/>
            <person name="Buettner F."/>
            <person name="Martinez-Arias R."/>
            <person name="Goesmann A."/>
            <person name="Baltes N."/>
            <person name="Tegetmeyer H."/>
            <person name="Singh M."/>
            <person name="Gerlach G.F."/>
        </authorList>
    </citation>
    <scope>NUCLEOTIDE SEQUENCE [LARGE SCALE GENOMIC DNA]</scope>
    <source>
        <strain>AP76</strain>
    </source>
</reference>
<dbReference type="EMBL" id="CP001091">
    <property type="protein sequence ID" value="ACE61238.1"/>
    <property type="molecule type" value="Genomic_DNA"/>
</dbReference>
<dbReference type="RefSeq" id="WP_005611747.1">
    <property type="nucleotide sequence ID" value="NC_010939.1"/>
</dbReference>
<dbReference type="SMR" id="B3GX86"/>
<dbReference type="KEGG" id="apa:APP7_0586"/>
<dbReference type="HOGENOM" id="CLU_038009_1_0_6"/>
<dbReference type="Proteomes" id="UP000001226">
    <property type="component" value="Chromosome"/>
</dbReference>
<dbReference type="GO" id="GO:0005829">
    <property type="term" value="C:cytosol"/>
    <property type="evidence" value="ECO:0007669"/>
    <property type="project" value="TreeGrafter"/>
</dbReference>
<dbReference type="GO" id="GO:0005886">
    <property type="term" value="C:plasma membrane"/>
    <property type="evidence" value="ECO:0007669"/>
    <property type="project" value="UniProtKB-SubCell"/>
</dbReference>
<dbReference type="GO" id="GO:0005525">
    <property type="term" value="F:GTP binding"/>
    <property type="evidence" value="ECO:0007669"/>
    <property type="project" value="UniProtKB-UniRule"/>
</dbReference>
<dbReference type="GO" id="GO:0003924">
    <property type="term" value="F:GTPase activity"/>
    <property type="evidence" value="ECO:0007669"/>
    <property type="project" value="UniProtKB-UniRule"/>
</dbReference>
<dbReference type="GO" id="GO:0043024">
    <property type="term" value="F:ribosomal small subunit binding"/>
    <property type="evidence" value="ECO:0007669"/>
    <property type="project" value="TreeGrafter"/>
</dbReference>
<dbReference type="GO" id="GO:0070181">
    <property type="term" value="F:small ribosomal subunit rRNA binding"/>
    <property type="evidence" value="ECO:0007669"/>
    <property type="project" value="UniProtKB-UniRule"/>
</dbReference>
<dbReference type="GO" id="GO:0000028">
    <property type="term" value="P:ribosomal small subunit assembly"/>
    <property type="evidence" value="ECO:0007669"/>
    <property type="project" value="TreeGrafter"/>
</dbReference>
<dbReference type="CDD" id="cd04163">
    <property type="entry name" value="Era"/>
    <property type="match status" value="1"/>
</dbReference>
<dbReference type="CDD" id="cd22534">
    <property type="entry name" value="KH-II_Era"/>
    <property type="match status" value="1"/>
</dbReference>
<dbReference type="FunFam" id="3.30.300.20:FF:000003">
    <property type="entry name" value="GTPase Era"/>
    <property type="match status" value="1"/>
</dbReference>
<dbReference type="FunFam" id="3.40.50.300:FF:000094">
    <property type="entry name" value="GTPase Era"/>
    <property type="match status" value="1"/>
</dbReference>
<dbReference type="Gene3D" id="3.30.300.20">
    <property type="match status" value="1"/>
</dbReference>
<dbReference type="Gene3D" id="3.40.50.300">
    <property type="entry name" value="P-loop containing nucleotide triphosphate hydrolases"/>
    <property type="match status" value="1"/>
</dbReference>
<dbReference type="HAMAP" id="MF_00367">
    <property type="entry name" value="GTPase_Era"/>
    <property type="match status" value="1"/>
</dbReference>
<dbReference type="InterPro" id="IPR030388">
    <property type="entry name" value="G_ERA_dom"/>
</dbReference>
<dbReference type="InterPro" id="IPR006073">
    <property type="entry name" value="GTP-bd"/>
</dbReference>
<dbReference type="InterPro" id="IPR005662">
    <property type="entry name" value="GTPase_Era-like"/>
</dbReference>
<dbReference type="InterPro" id="IPR015946">
    <property type="entry name" value="KH_dom-like_a/b"/>
</dbReference>
<dbReference type="InterPro" id="IPR004044">
    <property type="entry name" value="KH_dom_type_2"/>
</dbReference>
<dbReference type="InterPro" id="IPR009019">
    <property type="entry name" value="KH_sf_prok-type"/>
</dbReference>
<dbReference type="InterPro" id="IPR027417">
    <property type="entry name" value="P-loop_NTPase"/>
</dbReference>
<dbReference type="InterPro" id="IPR005225">
    <property type="entry name" value="Small_GTP-bd"/>
</dbReference>
<dbReference type="NCBIfam" id="TIGR00436">
    <property type="entry name" value="era"/>
    <property type="match status" value="1"/>
</dbReference>
<dbReference type="NCBIfam" id="NF000908">
    <property type="entry name" value="PRK00089.1"/>
    <property type="match status" value="1"/>
</dbReference>
<dbReference type="NCBIfam" id="TIGR00231">
    <property type="entry name" value="small_GTP"/>
    <property type="match status" value="1"/>
</dbReference>
<dbReference type="PANTHER" id="PTHR42698">
    <property type="entry name" value="GTPASE ERA"/>
    <property type="match status" value="1"/>
</dbReference>
<dbReference type="PANTHER" id="PTHR42698:SF1">
    <property type="entry name" value="GTPASE ERA, MITOCHONDRIAL"/>
    <property type="match status" value="1"/>
</dbReference>
<dbReference type="Pfam" id="PF07650">
    <property type="entry name" value="KH_2"/>
    <property type="match status" value="1"/>
</dbReference>
<dbReference type="Pfam" id="PF01926">
    <property type="entry name" value="MMR_HSR1"/>
    <property type="match status" value="1"/>
</dbReference>
<dbReference type="PRINTS" id="PR00326">
    <property type="entry name" value="GTP1OBG"/>
</dbReference>
<dbReference type="SUPFAM" id="SSF52540">
    <property type="entry name" value="P-loop containing nucleoside triphosphate hydrolases"/>
    <property type="match status" value="1"/>
</dbReference>
<dbReference type="SUPFAM" id="SSF54814">
    <property type="entry name" value="Prokaryotic type KH domain (KH-domain type II)"/>
    <property type="match status" value="1"/>
</dbReference>
<dbReference type="PROSITE" id="PS51713">
    <property type="entry name" value="G_ERA"/>
    <property type="match status" value="1"/>
</dbReference>
<dbReference type="PROSITE" id="PS50823">
    <property type="entry name" value="KH_TYPE_2"/>
    <property type="match status" value="1"/>
</dbReference>